<sequence length="367" mass="42275">MTPENLPIERYDDQLAEKTARLKTLMSPFTAPEPEVFRSPVSHYRMRAEFRIWHDEDEMYHIMFDQQTKQRIRVDKFPAASELINRLMSALIAAIKPEPILRRKLFQIDYLSTRSGKIIASLLYHRKLDDEWQQQAEKLRDDLRAQGFDLQLIGRASKMKIMLDQDYVDEVLPVAGRDMIYRQVENSFTQPNAALNIQMLEWALDVTTGSKGDLLELYCGNGNFSLALARNFERVLATEIAKPSVAAAQYNIAANQIDNVQIIRMAAEDFTQAMNGVREFNRLKGIDLSSYNCETIFVDPPRSGLDDETVKMVQAYPRILYISCNPETLCANLETLQQTHSISRLALFDQFPYTHHMECGVLLEKRV</sequence>
<name>TRMA_SERP5</name>
<dbReference type="EC" id="2.1.1.-" evidence="1"/>
<dbReference type="EC" id="2.1.1.35" evidence="1"/>
<dbReference type="EMBL" id="CP000826">
    <property type="protein sequence ID" value="ABV43864.1"/>
    <property type="molecule type" value="Genomic_DNA"/>
</dbReference>
<dbReference type="SMR" id="A8GL74"/>
<dbReference type="STRING" id="399741.Spro_4771"/>
<dbReference type="KEGG" id="spe:Spro_4771"/>
<dbReference type="eggNOG" id="COG2265">
    <property type="taxonomic scope" value="Bacteria"/>
</dbReference>
<dbReference type="HOGENOM" id="CLU_043022_0_0_6"/>
<dbReference type="OrthoDB" id="9804590at2"/>
<dbReference type="GO" id="GO:0005829">
    <property type="term" value="C:cytosol"/>
    <property type="evidence" value="ECO:0007669"/>
    <property type="project" value="TreeGrafter"/>
</dbReference>
<dbReference type="GO" id="GO:0019843">
    <property type="term" value="F:rRNA binding"/>
    <property type="evidence" value="ECO:0007669"/>
    <property type="project" value="TreeGrafter"/>
</dbReference>
<dbReference type="GO" id="GO:0030697">
    <property type="term" value="F:tRNA (uracil(54)-C5)-methyltransferase activity, S-adenosyl methionine-dependent"/>
    <property type="evidence" value="ECO:0007669"/>
    <property type="project" value="UniProtKB-UniRule"/>
</dbReference>
<dbReference type="GO" id="GO:0000049">
    <property type="term" value="F:tRNA binding"/>
    <property type="evidence" value="ECO:0007669"/>
    <property type="project" value="TreeGrafter"/>
</dbReference>
<dbReference type="GO" id="GO:0030488">
    <property type="term" value="P:tRNA methylation"/>
    <property type="evidence" value="ECO:0007669"/>
    <property type="project" value="UniProtKB-UniRule"/>
</dbReference>
<dbReference type="CDD" id="cd02440">
    <property type="entry name" value="AdoMet_MTases"/>
    <property type="match status" value="1"/>
</dbReference>
<dbReference type="FunFam" id="2.40.50.1070:FF:000001">
    <property type="entry name" value="tRNA/tmRNA (uracil-C(5))-methyltransferase"/>
    <property type="match status" value="1"/>
</dbReference>
<dbReference type="FunFam" id="3.40.50.150:FF:000012">
    <property type="entry name" value="tRNA/tmRNA (uracil-C(5))-methyltransferase"/>
    <property type="match status" value="1"/>
</dbReference>
<dbReference type="Gene3D" id="2.40.50.1070">
    <property type="match status" value="1"/>
</dbReference>
<dbReference type="Gene3D" id="3.40.50.150">
    <property type="entry name" value="Vaccinia Virus protein VP39"/>
    <property type="match status" value="1"/>
</dbReference>
<dbReference type="HAMAP" id="MF_01011">
    <property type="entry name" value="RNA_methyltr_TrmA"/>
    <property type="match status" value="1"/>
</dbReference>
<dbReference type="InterPro" id="IPR030390">
    <property type="entry name" value="MeTrfase_TrmA_AS"/>
</dbReference>
<dbReference type="InterPro" id="IPR030391">
    <property type="entry name" value="MeTrfase_TrmA_CS"/>
</dbReference>
<dbReference type="InterPro" id="IPR029063">
    <property type="entry name" value="SAM-dependent_MTases_sf"/>
</dbReference>
<dbReference type="InterPro" id="IPR011869">
    <property type="entry name" value="TrmA_MeTrfase"/>
</dbReference>
<dbReference type="InterPro" id="IPR010280">
    <property type="entry name" value="U5_MeTrfase_fam"/>
</dbReference>
<dbReference type="NCBIfam" id="TIGR02143">
    <property type="entry name" value="trmA_only"/>
    <property type="match status" value="1"/>
</dbReference>
<dbReference type="PANTHER" id="PTHR47790">
    <property type="entry name" value="TRNA/TMRNA (URACIL-C(5))-METHYLTRANSFERASE"/>
    <property type="match status" value="1"/>
</dbReference>
<dbReference type="PANTHER" id="PTHR47790:SF2">
    <property type="entry name" value="TRNA_TMRNA (URACIL-C(5))-METHYLTRANSFERASE"/>
    <property type="match status" value="1"/>
</dbReference>
<dbReference type="Pfam" id="PF05958">
    <property type="entry name" value="tRNA_U5-meth_tr"/>
    <property type="match status" value="1"/>
</dbReference>
<dbReference type="SUPFAM" id="SSF53335">
    <property type="entry name" value="S-adenosyl-L-methionine-dependent methyltransferases"/>
    <property type="match status" value="1"/>
</dbReference>
<dbReference type="PROSITE" id="PS51687">
    <property type="entry name" value="SAM_MT_RNA_M5U"/>
    <property type="match status" value="1"/>
</dbReference>
<dbReference type="PROSITE" id="PS01230">
    <property type="entry name" value="TRMA_1"/>
    <property type="match status" value="1"/>
</dbReference>
<dbReference type="PROSITE" id="PS01231">
    <property type="entry name" value="TRMA_2"/>
    <property type="match status" value="1"/>
</dbReference>
<proteinExistence type="inferred from homology"/>
<keyword id="KW-0489">Methyltransferase</keyword>
<keyword id="KW-0949">S-adenosyl-L-methionine</keyword>
<keyword id="KW-0808">Transferase</keyword>
<keyword id="KW-0819">tRNA processing</keyword>
<organism>
    <name type="scientific">Serratia proteamaculans (strain 568)</name>
    <dbReference type="NCBI Taxonomy" id="399741"/>
    <lineage>
        <taxon>Bacteria</taxon>
        <taxon>Pseudomonadati</taxon>
        <taxon>Pseudomonadota</taxon>
        <taxon>Gammaproteobacteria</taxon>
        <taxon>Enterobacterales</taxon>
        <taxon>Yersiniaceae</taxon>
        <taxon>Serratia</taxon>
    </lineage>
</organism>
<gene>
    <name evidence="1" type="primary">trmA</name>
    <name type="ordered locus">Spro_4771</name>
</gene>
<protein>
    <recommendedName>
        <fullName evidence="1">tRNA/tmRNA (uracil-C(5))-methyltransferase</fullName>
        <ecNumber evidence="1">2.1.1.-</ecNumber>
        <ecNumber evidence="1">2.1.1.35</ecNumber>
    </recommendedName>
    <alternativeName>
        <fullName evidence="1">tRNA (uracil(54)-C(5))-methyltransferase</fullName>
    </alternativeName>
    <alternativeName>
        <fullName evidence="1">tRNA(m5U54)-methyltransferase</fullName>
        <shortName evidence="1">RUMT</shortName>
    </alternativeName>
    <alternativeName>
        <fullName evidence="1">tmRNA (uracil(341)-C(5))-methyltransferase</fullName>
    </alternativeName>
</protein>
<feature type="chain" id="PRO_1000072911" description="tRNA/tmRNA (uracil-C(5))-methyltransferase">
    <location>
        <begin position="1"/>
        <end position="367"/>
    </location>
</feature>
<feature type="active site" description="Nucleophile" evidence="1">
    <location>
        <position position="324"/>
    </location>
</feature>
<feature type="active site" description="Proton acceptor" evidence="1">
    <location>
        <position position="358"/>
    </location>
</feature>
<feature type="binding site" evidence="1">
    <location>
        <position position="190"/>
    </location>
    <ligand>
        <name>S-adenosyl-L-methionine</name>
        <dbReference type="ChEBI" id="CHEBI:59789"/>
    </ligand>
</feature>
<feature type="binding site" evidence="1">
    <location>
        <position position="218"/>
    </location>
    <ligand>
        <name>S-adenosyl-L-methionine</name>
        <dbReference type="ChEBI" id="CHEBI:59789"/>
    </ligand>
</feature>
<feature type="binding site" evidence="1">
    <location>
        <position position="223"/>
    </location>
    <ligand>
        <name>S-adenosyl-L-methionine</name>
        <dbReference type="ChEBI" id="CHEBI:59789"/>
    </ligand>
</feature>
<feature type="binding site" evidence="1">
    <location>
        <position position="239"/>
    </location>
    <ligand>
        <name>S-adenosyl-L-methionine</name>
        <dbReference type="ChEBI" id="CHEBI:59789"/>
    </ligand>
</feature>
<feature type="binding site" evidence="1">
    <location>
        <position position="299"/>
    </location>
    <ligand>
        <name>S-adenosyl-L-methionine</name>
        <dbReference type="ChEBI" id="CHEBI:59789"/>
    </ligand>
</feature>
<evidence type="ECO:0000255" key="1">
    <source>
        <dbReference type="HAMAP-Rule" id="MF_01011"/>
    </source>
</evidence>
<accession>A8GL74</accession>
<reference key="1">
    <citation type="submission" date="2007-09" db="EMBL/GenBank/DDBJ databases">
        <title>Complete sequence of chromosome of Serratia proteamaculans 568.</title>
        <authorList>
            <consortium name="US DOE Joint Genome Institute"/>
            <person name="Copeland A."/>
            <person name="Lucas S."/>
            <person name="Lapidus A."/>
            <person name="Barry K."/>
            <person name="Glavina del Rio T."/>
            <person name="Dalin E."/>
            <person name="Tice H."/>
            <person name="Pitluck S."/>
            <person name="Chain P."/>
            <person name="Malfatti S."/>
            <person name="Shin M."/>
            <person name="Vergez L."/>
            <person name="Schmutz J."/>
            <person name="Larimer F."/>
            <person name="Land M."/>
            <person name="Hauser L."/>
            <person name="Kyrpides N."/>
            <person name="Kim E."/>
            <person name="Taghavi S."/>
            <person name="Newman L."/>
            <person name="Vangronsveld J."/>
            <person name="van der Lelie D."/>
            <person name="Richardson P."/>
        </authorList>
    </citation>
    <scope>NUCLEOTIDE SEQUENCE [LARGE SCALE GENOMIC DNA]</scope>
    <source>
        <strain>568</strain>
    </source>
</reference>
<comment type="function">
    <text evidence="1">Dual-specificity methyltransferase that catalyzes the formation of 5-methyluridine at position 54 (m5U54) in all tRNAs, and that of position 341 (m5U341) in tmRNA (transfer-mRNA).</text>
</comment>
<comment type="catalytic activity">
    <reaction evidence="1">
        <text>uridine(54) in tRNA + S-adenosyl-L-methionine = 5-methyluridine(54) in tRNA + S-adenosyl-L-homocysteine + H(+)</text>
        <dbReference type="Rhea" id="RHEA:42712"/>
        <dbReference type="Rhea" id="RHEA-COMP:10167"/>
        <dbReference type="Rhea" id="RHEA-COMP:10193"/>
        <dbReference type="ChEBI" id="CHEBI:15378"/>
        <dbReference type="ChEBI" id="CHEBI:57856"/>
        <dbReference type="ChEBI" id="CHEBI:59789"/>
        <dbReference type="ChEBI" id="CHEBI:65315"/>
        <dbReference type="ChEBI" id="CHEBI:74447"/>
        <dbReference type="EC" id="2.1.1.35"/>
    </reaction>
</comment>
<comment type="catalytic activity">
    <reaction evidence="1">
        <text>uridine(341) in tmRNA + S-adenosyl-L-methionine = 5-methyluridine(341) in tmRNA + S-adenosyl-L-homocysteine + H(+)</text>
        <dbReference type="Rhea" id="RHEA:43612"/>
        <dbReference type="Rhea" id="RHEA-COMP:10630"/>
        <dbReference type="Rhea" id="RHEA-COMP:10631"/>
        <dbReference type="ChEBI" id="CHEBI:15378"/>
        <dbReference type="ChEBI" id="CHEBI:57856"/>
        <dbReference type="ChEBI" id="CHEBI:59789"/>
        <dbReference type="ChEBI" id="CHEBI:65315"/>
        <dbReference type="ChEBI" id="CHEBI:74447"/>
    </reaction>
</comment>
<comment type="similarity">
    <text evidence="1">Belongs to the class I-like SAM-binding methyltransferase superfamily. RNA M5U methyltransferase family. TrmA subfamily.</text>
</comment>